<gene>
    <name evidence="1" type="primary">rplE</name>
    <name type="ordered locus">BUAP5A_505</name>
</gene>
<comment type="function">
    <text evidence="1">This is one of the proteins that bind and probably mediate the attachment of the 5S RNA into the large ribosomal subunit, where it forms part of the central protuberance. In the 70S ribosome it contacts protein S13 of the 30S subunit (bridge B1b), connecting the 2 subunits; this bridge is implicated in subunit movement. Contacts the P site tRNA; the 5S rRNA and some of its associated proteins might help stabilize positioning of ribosome-bound tRNAs.</text>
</comment>
<comment type="subunit">
    <text evidence="1">Part of the 50S ribosomal subunit; part of the 5S rRNA/L5/L18/L25 subcomplex. Contacts the 5S rRNA and the P site tRNA. Forms a bridge to the 30S subunit in the 70S ribosome.</text>
</comment>
<comment type="similarity">
    <text evidence="1">Belongs to the universal ribosomal protein uL5 family.</text>
</comment>
<protein>
    <recommendedName>
        <fullName evidence="1">Large ribosomal subunit protein uL5</fullName>
    </recommendedName>
    <alternativeName>
        <fullName evidence="2">50S ribosomal protein L5</fullName>
    </alternativeName>
</protein>
<accession>B8D9T5</accession>
<reference key="1">
    <citation type="journal article" date="2009" name="Science">
        <title>The dynamics and time scale of ongoing genomic erosion in symbiotic bacteria.</title>
        <authorList>
            <person name="Moran N.A."/>
            <person name="McLaughlin H.J."/>
            <person name="Sorek R."/>
        </authorList>
    </citation>
    <scope>NUCLEOTIDE SEQUENCE [LARGE SCALE GENOMIC DNA]</scope>
    <source>
        <strain>5A</strain>
    </source>
</reference>
<organism>
    <name type="scientific">Buchnera aphidicola subsp. Acyrthosiphon pisum (strain 5A)</name>
    <dbReference type="NCBI Taxonomy" id="563178"/>
    <lineage>
        <taxon>Bacteria</taxon>
        <taxon>Pseudomonadati</taxon>
        <taxon>Pseudomonadota</taxon>
        <taxon>Gammaproteobacteria</taxon>
        <taxon>Enterobacterales</taxon>
        <taxon>Erwiniaceae</taxon>
        <taxon>Buchnera</taxon>
    </lineage>
</organism>
<evidence type="ECO:0000255" key="1">
    <source>
        <dbReference type="HAMAP-Rule" id="MF_01333"/>
    </source>
</evidence>
<evidence type="ECO:0000305" key="2"/>
<keyword id="KW-0687">Ribonucleoprotein</keyword>
<keyword id="KW-0689">Ribosomal protein</keyword>
<keyword id="KW-0694">RNA-binding</keyword>
<keyword id="KW-0699">rRNA-binding</keyword>
<keyword id="KW-0820">tRNA-binding</keyword>
<sequence length="179" mass="20295">MATLYDYYKSKVITQLMHELNYSSVMQVPKIDKITLNMGVGGAASDKKILDNAILDLTAISGQKPLITKARKSVAGFKIRQGYPIGCKVTLRGQKKWHFFERLIIIAVPRIRDFRGLSSHSFDGQGNYSLGIREQIIFPEIDYDKIDRVRGLDITITTTAKSNHEARLLLSAFNFPFRK</sequence>
<name>RL5_BUCA5</name>
<proteinExistence type="inferred from homology"/>
<feature type="chain" id="PRO_1000166117" description="Large ribosomal subunit protein uL5">
    <location>
        <begin position="1"/>
        <end position="179"/>
    </location>
</feature>
<dbReference type="EMBL" id="CP001161">
    <property type="protein sequence ID" value="ACL30856.1"/>
    <property type="molecule type" value="Genomic_DNA"/>
</dbReference>
<dbReference type="RefSeq" id="WP_009874463.1">
    <property type="nucleotide sequence ID" value="NC_011833.1"/>
</dbReference>
<dbReference type="SMR" id="B8D9T5"/>
<dbReference type="KEGG" id="bap:BUAP5A_505"/>
<dbReference type="HOGENOM" id="CLU_061015_2_1_6"/>
<dbReference type="OrthoDB" id="9806626at2"/>
<dbReference type="Proteomes" id="UP000006904">
    <property type="component" value="Chromosome"/>
</dbReference>
<dbReference type="GO" id="GO:1990904">
    <property type="term" value="C:ribonucleoprotein complex"/>
    <property type="evidence" value="ECO:0007669"/>
    <property type="project" value="UniProtKB-KW"/>
</dbReference>
<dbReference type="GO" id="GO:0005840">
    <property type="term" value="C:ribosome"/>
    <property type="evidence" value="ECO:0007669"/>
    <property type="project" value="UniProtKB-KW"/>
</dbReference>
<dbReference type="GO" id="GO:0019843">
    <property type="term" value="F:rRNA binding"/>
    <property type="evidence" value="ECO:0007669"/>
    <property type="project" value="UniProtKB-UniRule"/>
</dbReference>
<dbReference type="GO" id="GO:0003735">
    <property type="term" value="F:structural constituent of ribosome"/>
    <property type="evidence" value="ECO:0007669"/>
    <property type="project" value="InterPro"/>
</dbReference>
<dbReference type="GO" id="GO:0000049">
    <property type="term" value="F:tRNA binding"/>
    <property type="evidence" value="ECO:0007669"/>
    <property type="project" value="UniProtKB-UniRule"/>
</dbReference>
<dbReference type="GO" id="GO:0006412">
    <property type="term" value="P:translation"/>
    <property type="evidence" value="ECO:0007669"/>
    <property type="project" value="UniProtKB-UniRule"/>
</dbReference>
<dbReference type="FunFam" id="3.30.1440.10:FF:000001">
    <property type="entry name" value="50S ribosomal protein L5"/>
    <property type="match status" value="1"/>
</dbReference>
<dbReference type="Gene3D" id="3.30.1440.10">
    <property type="match status" value="1"/>
</dbReference>
<dbReference type="HAMAP" id="MF_01333_B">
    <property type="entry name" value="Ribosomal_uL5_B"/>
    <property type="match status" value="1"/>
</dbReference>
<dbReference type="InterPro" id="IPR002132">
    <property type="entry name" value="Ribosomal_uL5"/>
</dbReference>
<dbReference type="InterPro" id="IPR020930">
    <property type="entry name" value="Ribosomal_uL5_bac-type"/>
</dbReference>
<dbReference type="InterPro" id="IPR031309">
    <property type="entry name" value="Ribosomal_uL5_C"/>
</dbReference>
<dbReference type="InterPro" id="IPR020929">
    <property type="entry name" value="Ribosomal_uL5_CS"/>
</dbReference>
<dbReference type="InterPro" id="IPR022803">
    <property type="entry name" value="Ribosomal_uL5_dom_sf"/>
</dbReference>
<dbReference type="InterPro" id="IPR031310">
    <property type="entry name" value="Ribosomal_uL5_N"/>
</dbReference>
<dbReference type="NCBIfam" id="NF000585">
    <property type="entry name" value="PRK00010.1"/>
    <property type="match status" value="1"/>
</dbReference>
<dbReference type="PANTHER" id="PTHR11994">
    <property type="entry name" value="60S RIBOSOMAL PROTEIN L11-RELATED"/>
    <property type="match status" value="1"/>
</dbReference>
<dbReference type="Pfam" id="PF00281">
    <property type="entry name" value="Ribosomal_L5"/>
    <property type="match status" value="1"/>
</dbReference>
<dbReference type="Pfam" id="PF00673">
    <property type="entry name" value="Ribosomal_L5_C"/>
    <property type="match status" value="1"/>
</dbReference>
<dbReference type="PIRSF" id="PIRSF002161">
    <property type="entry name" value="Ribosomal_L5"/>
    <property type="match status" value="1"/>
</dbReference>
<dbReference type="SUPFAM" id="SSF55282">
    <property type="entry name" value="RL5-like"/>
    <property type="match status" value="1"/>
</dbReference>
<dbReference type="PROSITE" id="PS00358">
    <property type="entry name" value="RIBOSOMAL_L5"/>
    <property type="match status" value="1"/>
</dbReference>